<keyword id="KW-0997">Cell inner membrane</keyword>
<keyword id="KW-1003">Cell membrane</keyword>
<keyword id="KW-0472">Membrane</keyword>
<keyword id="KW-0812">Transmembrane</keyword>
<keyword id="KW-1133">Transmembrane helix</keyword>
<keyword id="KW-0813">Transport</keyword>
<comment type="subcellular location">
    <subcellularLocation>
        <location evidence="1">Cell inner membrane</location>
        <topology evidence="1">Multi-pass membrane protein</topology>
    </subcellularLocation>
</comment>
<comment type="similarity">
    <text evidence="1">Belongs to the major facilitator superfamily. YhhS family.</text>
</comment>
<dbReference type="EMBL" id="CP000124">
    <property type="protein sequence ID" value="ABA48136.1"/>
    <property type="molecule type" value="Genomic_DNA"/>
</dbReference>
<dbReference type="RefSeq" id="WP_004185668.1">
    <property type="nucleotide sequence ID" value="NC_007434.1"/>
</dbReference>
<dbReference type="SMR" id="Q3JPB5"/>
<dbReference type="EnsemblBacteria" id="ABA48136">
    <property type="protein sequence ID" value="ABA48136"/>
    <property type="gene ID" value="BURPS1710b_3216"/>
</dbReference>
<dbReference type="KEGG" id="bpm:BURPS1710b_3216"/>
<dbReference type="HOGENOM" id="CLU_001265_10_3_4"/>
<dbReference type="Proteomes" id="UP000002700">
    <property type="component" value="Chromosome I"/>
</dbReference>
<dbReference type="GO" id="GO:0005886">
    <property type="term" value="C:plasma membrane"/>
    <property type="evidence" value="ECO:0007669"/>
    <property type="project" value="UniProtKB-SubCell"/>
</dbReference>
<dbReference type="GO" id="GO:0022857">
    <property type="term" value="F:transmembrane transporter activity"/>
    <property type="evidence" value="ECO:0007669"/>
    <property type="project" value="UniProtKB-UniRule"/>
</dbReference>
<dbReference type="CDD" id="cd17489">
    <property type="entry name" value="MFS_YfcJ_like"/>
    <property type="match status" value="1"/>
</dbReference>
<dbReference type="Gene3D" id="1.20.1250.20">
    <property type="entry name" value="MFS general substrate transporter like domains"/>
    <property type="match status" value="1"/>
</dbReference>
<dbReference type="HAMAP" id="MF_01118">
    <property type="entry name" value="MFS_YhhS"/>
    <property type="match status" value="1"/>
</dbReference>
<dbReference type="InterPro" id="IPR011701">
    <property type="entry name" value="MFS"/>
</dbReference>
<dbReference type="InterPro" id="IPR020846">
    <property type="entry name" value="MFS_dom"/>
</dbReference>
<dbReference type="InterPro" id="IPR036259">
    <property type="entry name" value="MFS_trans_sf"/>
</dbReference>
<dbReference type="InterPro" id="IPR050171">
    <property type="entry name" value="MFS_Transporters"/>
</dbReference>
<dbReference type="InterPro" id="IPR023008">
    <property type="entry name" value="MFS_YhhS-like"/>
</dbReference>
<dbReference type="NCBIfam" id="NF003477">
    <property type="entry name" value="PRK05122.1"/>
    <property type="match status" value="1"/>
</dbReference>
<dbReference type="NCBIfam" id="NF009048">
    <property type="entry name" value="PRK12382.1"/>
    <property type="match status" value="1"/>
</dbReference>
<dbReference type="PANTHER" id="PTHR23517:SF13">
    <property type="entry name" value="MAJOR FACILITATOR SUPERFAMILY MFS_1"/>
    <property type="match status" value="1"/>
</dbReference>
<dbReference type="PANTHER" id="PTHR23517">
    <property type="entry name" value="RESISTANCE PROTEIN MDTM, PUTATIVE-RELATED-RELATED"/>
    <property type="match status" value="1"/>
</dbReference>
<dbReference type="Pfam" id="PF07690">
    <property type="entry name" value="MFS_1"/>
    <property type="match status" value="1"/>
</dbReference>
<dbReference type="SUPFAM" id="SSF103473">
    <property type="entry name" value="MFS general substrate transporter"/>
    <property type="match status" value="1"/>
</dbReference>
<dbReference type="PROSITE" id="PS50850">
    <property type="entry name" value="MFS"/>
    <property type="match status" value="1"/>
</dbReference>
<organism>
    <name type="scientific">Burkholderia pseudomallei (strain 1710b)</name>
    <dbReference type="NCBI Taxonomy" id="320372"/>
    <lineage>
        <taxon>Bacteria</taxon>
        <taxon>Pseudomonadati</taxon>
        <taxon>Pseudomonadota</taxon>
        <taxon>Betaproteobacteria</taxon>
        <taxon>Burkholderiales</taxon>
        <taxon>Burkholderiaceae</taxon>
        <taxon>Burkholderia</taxon>
        <taxon>pseudomallei group</taxon>
    </lineage>
</organism>
<gene>
    <name type="ordered locus">BURPS1710b_3216</name>
</gene>
<reference key="1">
    <citation type="journal article" date="2010" name="Genome Biol. Evol.">
        <title>Continuing evolution of Burkholderia mallei through genome reduction and large-scale rearrangements.</title>
        <authorList>
            <person name="Losada L."/>
            <person name="Ronning C.M."/>
            <person name="DeShazer D."/>
            <person name="Woods D."/>
            <person name="Fedorova N."/>
            <person name="Kim H.S."/>
            <person name="Shabalina S.A."/>
            <person name="Pearson T.R."/>
            <person name="Brinkac L."/>
            <person name="Tan P."/>
            <person name="Nandi T."/>
            <person name="Crabtree J."/>
            <person name="Badger J."/>
            <person name="Beckstrom-Sternberg S."/>
            <person name="Saqib M."/>
            <person name="Schutzer S.E."/>
            <person name="Keim P."/>
            <person name="Nierman W.C."/>
        </authorList>
    </citation>
    <scope>NUCLEOTIDE SEQUENCE [LARGE SCALE GENOMIC DNA]</scope>
    <source>
        <strain>1710b</strain>
    </source>
</reference>
<evidence type="ECO:0000255" key="1">
    <source>
        <dbReference type="HAMAP-Rule" id="MF_01118"/>
    </source>
</evidence>
<name>Y3216_BURP1</name>
<protein>
    <recommendedName>
        <fullName evidence="1">Uncharacterized MFS-type transporter BURPS1710b_3216</fullName>
    </recommendedName>
</protein>
<proteinExistence type="inferred from homology"/>
<sequence>MSADSADSVPSPRSAFATTLQIVSVVSFTFICYLTIGLPLAVLPGFVHDELGFSAIVAGAAISVQYFATLASRPLAGRCADTLGPKRTVLRGLAACGASGALLLSAFAFARWPAASIGLLVASRLVLGIGESLVGTGAILWGIGRVGTAHNARVISWNGIATYGALAIGAPVGVAISHALIPAVLGMLVIALAALGYYLARLITPVPLVHGERMSYASVLTRVLPHGLGLALGSAGFGSIATFITLYYAARHWPNAALSLTVFGTLFIGARLLFANTIKTHGGFRVAIVSFAFECAGLLMLWLAPVPHVALVGAALTGFGFALIFPALGVEAVALVPPASRGAALSAYSVFLDLSLGITGPLAGYVAGAFGYPQVFLCAAVAAAAGVALSTVLYQRQARLSGSGAAA</sequence>
<feature type="chain" id="PRO_1000137232" description="Uncharacterized MFS-type transporter BURPS1710b_3216">
    <location>
        <begin position="1"/>
        <end position="407"/>
    </location>
</feature>
<feature type="transmembrane region" description="Helical" evidence="1">
    <location>
        <begin position="22"/>
        <end position="42"/>
    </location>
</feature>
<feature type="transmembrane region" description="Helical" evidence="1">
    <location>
        <begin position="51"/>
        <end position="71"/>
    </location>
</feature>
<feature type="transmembrane region" description="Helical" evidence="1">
    <location>
        <begin position="101"/>
        <end position="121"/>
    </location>
</feature>
<feature type="transmembrane region" description="Helical" evidence="1">
    <location>
        <begin position="126"/>
        <end position="146"/>
    </location>
</feature>
<feature type="transmembrane region" description="Helical" evidence="1">
    <location>
        <begin position="154"/>
        <end position="174"/>
    </location>
</feature>
<feature type="transmembrane region" description="Helical" evidence="1">
    <location>
        <begin position="179"/>
        <end position="199"/>
    </location>
</feature>
<feature type="transmembrane region" description="Helical" evidence="1">
    <location>
        <begin position="227"/>
        <end position="247"/>
    </location>
</feature>
<feature type="transmembrane region" description="Helical" evidence="1">
    <location>
        <begin position="258"/>
        <end position="278"/>
    </location>
</feature>
<feature type="transmembrane region" description="Helical" evidence="1">
    <location>
        <begin position="286"/>
        <end position="306"/>
    </location>
</feature>
<feature type="transmembrane region" description="Helical" evidence="1">
    <location>
        <begin position="309"/>
        <end position="329"/>
    </location>
</feature>
<feature type="transmembrane region" description="Helical" evidence="1">
    <location>
        <begin position="347"/>
        <end position="367"/>
    </location>
</feature>
<feature type="transmembrane region" description="Helical" evidence="1">
    <location>
        <begin position="369"/>
        <end position="389"/>
    </location>
</feature>
<accession>Q3JPB5</accession>